<proteinExistence type="inferred from homology"/>
<gene>
    <name evidence="1" type="primary">pgsA</name>
    <name type="ordered locus">YPO1867</name>
    <name type="ordered locus">y2441</name>
    <name type="ordered locus">YP_1526</name>
</gene>
<feature type="chain" id="PRO_0000239135" description="CDP-diacylglycerol--glycerol-3-phosphate 3-phosphatidyltransferase">
    <location>
        <begin position="1"/>
        <end position="182"/>
    </location>
</feature>
<feature type="topological domain" description="Cytoplasmic" evidence="1">
    <location>
        <begin position="1"/>
        <end position="12"/>
    </location>
</feature>
<feature type="transmembrane region" description="Helical" evidence="1">
    <location>
        <begin position="13"/>
        <end position="37"/>
    </location>
</feature>
<feature type="topological domain" description="Periplasmic" evidence="1">
    <location>
        <begin position="38"/>
        <end position="60"/>
    </location>
</feature>
<feature type="transmembrane region" description="Helical" evidence="1">
    <location>
        <begin position="61"/>
        <end position="81"/>
    </location>
</feature>
<feature type="topological domain" description="Cytoplasmic" evidence="1">
    <location>
        <begin position="82"/>
        <end position="86"/>
    </location>
</feature>
<feature type="transmembrane region" description="Helical" evidence="1">
    <location>
        <begin position="87"/>
        <end position="107"/>
    </location>
</feature>
<feature type="topological domain" description="Periplasmic" evidence="1">
    <location>
        <begin position="108"/>
        <end position="145"/>
    </location>
</feature>
<feature type="transmembrane region" description="Helical" evidence="1">
    <location>
        <begin position="146"/>
        <end position="168"/>
    </location>
</feature>
<feature type="topological domain" description="Cytoplasmic" evidence="1">
    <location>
        <begin position="169"/>
        <end position="181"/>
    </location>
</feature>
<sequence length="182" mass="20806">MQLNIPTWLTLFRVVLIPFFVLAFYLPFVWAPMVCAIIFVFAAATDWFDGFLARRWKQTTRFGAFLDPVADKVMVAVALVLVAEHYHSWWITLPAATMIAREIIISSLREWMAEIGKRSSVAVSWVGKVKTMAQMGSLVGLLWRPDHNVELASFVLLYIAAVLTFWSMFQYLNAAWSDLLEP</sequence>
<name>PGSA_YERPE</name>
<reference key="1">
    <citation type="journal article" date="2001" name="Nature">
        <title>Genome sequence of Yersinia pestis, the causative agent of plague.</title>
        <authorList>
            <person name="Parkhill J."/>
            <person name="Wren B.W."/>
            <person name="Thomson N.R."/>
            <person name="Titball R.W."/>
            <person name="Holden M.T.G."/>
            <person name="Prentice M.B."/>
            <person name="Sebaihia M."/>
            <person name="James K.D."/>
            <person name="Churcher C.M."/>
            <person name="Mungall K.L."/>
            <person name="Baker S."/>
            <person name="Basham D."/>
            <person name="Bentley S.D."/>
            <person name="Brooks K."/>
            <person name="Cerdeno-Tarraga A.-M."/>
            <person name="Chillingworth T."/>
            <person name="Cronin A."/>
            <person name="Davies R.M."/>
            <person name="Davis P."/>
            <person name="Dougan G."/>
            <person name="Feltwell T."/>
            <person name="Hamlin N."/>
            <person name="Holroyd S."/>
            <person name="Jagels K."/>
            <person name="Karlyshev A.V."/>
            <person name="Leather S."/>
            <person name="Moule S."/>
            <person name="Oyston P.C.F."/>
            <person name="Quail M.A."/>
            <person name="Rutherford K.M."/>
            <person name="Simmonds M."/>
            <person name="Skelton J."/>
            <person name="Stevens K."/>
            <person name="Whitehead S."/>
            <person name="Barrell B.G."/>
        </authorList>
    </citation>
    <scope>NUCLEOTIDE SEQUENCE [LARGE SCALE GENOMIC DNA]</scope>
    <source>
        <strain>CO-92 / Biovar Orientalis</strain>
    </source>
</reference>
<reference key="2">
    <citation type="journal article" date="2002" name="J. Bacteriol.">
        <title>Genome sequence of Yersinia pestis KIM.</title>
        <authorList>
            <person name="Deng W."/>
            <person name="Burland V."/>
            <person name="Plunkett G. III"/>
            <person name="Boutin A."/>
            <person name="Mayhew G.F."/>
            <person name="Liss P."/>
            <person name="Perna N.T."/>
            <person name="Rose D.J."/>
            <person name="Mau B."/>
            <person name="Zhou S."/>
            <person name="Schwartz D.C."/>
            <person name="Fetherston J.D."/>
            <person name="Lindler L.E."/>
            <person name="Brubaker R.R."/>
            <person name="Plano G.V."/>
            <person name="Straley S.C."/>
            <person name="McDonough K.A."/>
            <person name="Nilles M.L."/>
            <person name="Matson J.S."/>
            <person name="Blattner F.R."/>
            <person name="Perry R.D."/>
        </authorList>
    </citation>
    <scope>NUCLEOTIDE SEQUENCE [LARGE SCALE GENOMIC DNA]</scope>
    <source>
        <strain>KIM10+ / Biovar Mediaevalis</strain>
    </source>
</reference>
<reference key="3">
    <citation type="journal article" date="2004" name="DNA Res.">
        <title>Complete genome sequence of Yersinia pestis strain 91001, an isolate avirulent to humans.</title>
        <authorList>
            <person name="Song Y."/>
            <person name="Tong Z."/>
            <person name="Wang J."/>
            <person name="Wang L."/>
            <person name="Guo Z."/>
            <person name="Han Y."/>
            <person name="Zhang J."/>
            <person name="Pei D."/>
            <person name="Zhou D."/>
            <person name="Qin H."/>
            <person name="Pang X."/>
            <person name="Han Y."/>
            <person name="Zhai J."/>
            <person name="Li M."/>
            <person name="Cui B."/>
            <person name="Qi Z."/>
            <person name="Jin L."/>
            <person name="Dai R."/>
            <person name="Chen F."/>
            <person name="Li S."/>
            <person name="Ye C."/>
            <person name="Du Z."/>
            <person name="Lin W."/>
            <person name="Wang J."/>
            <person name="Yu J."/>
            <person name="Yang H."/>
            <person name="Wang J."/>
            <person name="Huang P."/>
            <person name="Yang R."/>
        </authorList>
    </citation>
    <scope>NUCLEOTIDE SEQUENCE [LARGE SCALE GENOMIC DNA]</scope>
    <source>
        <strain>91001 / Biovar Mediaevalis</strain>
    </source>
</reference>
<comment type="function">
    <text evidence="1">Catalyzes the conversion of cytidine diphosphate diacylglycerol (CDP-DG) and glycerol 3-phosphate into phosphatidylglycerol. Essential for the synthesis of anionic phospholipids, thereby playing a role in balancing the ratio of zwitterionic and anionic phospholipids, which is thought to be important for normal membrane function.</text>
</comment>
<comment type="catalytic activity">
    <reaction evidence="1">
        <text>a CDP-1,2-diacyl-sn-glycerol + sn-glycerol 3-phosphate = a 1,2-diacyl-sn-glycero-3-phospho-(1'-sn-glycero-3'-phosphate) + CMP + H(+)</text>
        <dbReference type="Rhea" id="RHEA:12593"/>
        <dbReference type="ChEBI" id="CHEBI:15378"/>
        <dbReference type="ChEBI" id="CHEBI:57597"/>
        <dbReference type="ChEBI" id="CHEBI:58332"/>
        <dbReference type="ChEBI" id="CHEBI:60110"/>
        <dbReference type="ChEBI" id="CHEBI:60377"/>
        <dbReference type="EC" id="2.7.8.5"/>
    </reaction>
</comment>
<comment type="pathway">
    <text evidence="1">Phospholipid metabolism; phosphatidylglycerol biosynthesis; phosphatidylglycerol from CDP-diacylglycerol: step 1/2.</text>
</comment>
<comment type="subcellular location">
    <subcellularLocation>
        <location evidence="1">Cell inner membrane</location>
        <topology evidence="1">Multi-pass membrane protein</topology>
    </subcellularLocation>
</comment>
<comment type="similarity">
    <text evidence="1">Belongs to the CDP-alcohol phosphatidyltransferase class-I family.</text>
</comment>
<keyword id="KW-0997">Cell inner membrane</keyword>
<keyword id="KW-1003">Cell membrane</keyword>
<keyword id="KW-0444">Lipid biosynthesis</keyword>
<keyword id="KW-0443">Lipid metabolism</keyword>
<keyword id="KW-0472">Membrane</keyword>
<keyword id="KW-0594">Phospholipid biosynthesis</keyword>
<keyword id="KW-1208">Phospholipid metabolism</keyword>
<keyword id="KW-1185">Reference proteome</keyword>
<keyword id="KW-0808">Transferase</keyword>
<keyword id="KW-0812">Transmembrane</keyword>
<keyword id="KW-1133">Transmembrane helix</keyword>
<dbReference type="EC" id="2.7.8.5" evidence="1"/>
<dbReference type="EMBL" id="AL590842">
    <property type="protein sequence ID" value="CAL20507.1"/>
    <property type="molecule type" value="Genomic_DNA"/>
</dbReference>
<dbReference type="EMBL" id="AE009952">
    <property type="protein sequence ID" value="AAM85998.1"/>
    <property type="molecule type" value="Genomic_DNA"/>
</dbReference>
<dbReference type="EMBL" id="AE017042">
    <property type="protein sequence ID" value="AAS61761.1"/>
    <property type="molecule type" value="Genomic_DNA"/>
</dbReference>
<dbReference type="PIR" id="AH0227">
    <property type="entry name" value="AH0227"/>
</dbReference>
<dbReference type="RefSeq" id="WP_002220475.1">
    <property type="nucleotide sequence ID" value="NZ_WUCM01000005.1"/>
</dbReference>
<dbReference type="RefSeq" id="YP_002346861.1">
    <property type="nucleotide sequence ID" value="NC_003143.1"/>
</dbReference>
<dbReference type="SMR" id="Q8ZF51"/>
<dbReference type="STRING" id="214092.YPO1867"/>
<dbReference type="PaxDb" id="214092-YPO1867"/>
<dbReference type="DNASU" id="1147388"/>
<dbReference type="EnsemblBacteria" id="AAS61761">
    <property type="protein sequence ID" value="AAS61761"/>
    <property type="gene ID" value="YP_1526"/>
</dbReference>
<dbReference type="GeneID" id="96665312"/>
<dbReference type="KEGG" id="ype:YPO1867"/>
<dbReference type="KEGG" id="ypk:y2441"/>
<dbReference type="KEGG" id="ypm:YP_1526"/>
<dbReference type="PATRIC" id="fig|214092.21.peg.2232"/>
<dbReference type="eggNOG" id="COG0558">
    <property type="taxonomic scope" value="Bacteria"/>
</dbReference>
<dbReference type="HOGENOM" id="CLU_051314_2_1_6"/>
<dbReference type="OMA" id="WSMVYYL"/>
<dbReference type="OrthoDB" id="9796672at2"/>
<dbReference type="UniPathway" id="UPA00084">
    <property type="reaction ID" value="UER00503"/>
</dbReference>
<dbReference type="Proteomes" id="UP000000815">
    <property type="component" value="Chromosome"/>
</dbReference>
<dbReference type="Proteomes" id="UP000001019">
    <property type="component" value="Chromosome"/>
</dbReference>
<dbReference type="Proteomes" id="UP000002490">
    <property type="component" value="Chromosome"/>
</dbReference>
<dbReference type="GO" id="GO:0005886">
    <property type="term" value="C:plasma membrane"/>
    <property type="evidence" value="ECO:0000318"/>
    <property type="project" value="GO_Central"/>
</dbReference>
<dbReference type="GO" id="GO:0008444">
    <property type="term" value="F:CDP-diacylglycerol-glycerol-3-phosphate 3-phosphatidyltransferase activity"/>
    <property type="evidence" value="ECO:0007669"/>
    <property type="project" value="UniProtKB-UniRule"/>
</dbReference>
<dbReference type="GO" id="GO:0046474">
    <property type="term" value="P:glycerophospholipid biosynthetic process"/>
    <property type="evidence" value="ECO:0000318"/>
    <property type="project" value="GO_Central"/>
</dbReference>
<dbReference type="GO" id="GO:0006655">
    <property type="term" value="P:phosphatidylglycerol biosynthetic process"/>
    <property type="evidence" value="ECO:0007669"/>
    <property type="project" value="UniProtKB-UniRule"/>
</dbReference>
<dbReference type="FunFam" id="1.20.120.1760:FF:000001">
    <property type="entry name" value="CDP-diacylglycerol--glycerol-3-phosphate 3-phosphatidyltransferase"/>
    <property type="match status" value="1"/>
</dbReference>
<dbReference type="Gene3D" id="1.20.120.1760">
    <property type="match status" value="1"/>
</dbReference>
<dbReference type="HAMAP" id="MF_01437">
    <property type="entry name" value="PgsA"/>
    <property type="match status" value="1"/>
</dbReference>
<dbReference type="InterPro" id="IPR050324">
    <property type="entry name" value="CDP-alcohol_PTase-I"/>
</dbReference>
<dbReference type="InterPro" id="IPR000462">
    <property type="entry name" value="CDP-OH_P_trans"/>
</dbReference>
<dbReference type="InterPro" id="IPR043130">
    <property type="entry name" value="CDP-OH_PTrfase_TM_dom"/>
</dbReference>
<dbReference type="InterPro" id="IPR048254">
    <property type="entry name" value="CDP_ALCOHOL_P_TRANSF_CS"/>
</dbReference>
<dbReference type="InterPro" id="IPR023762">
    <property type="entry name" value="PGP_synthase_bac"/>
</dbReference>
<dbReference type="InterPro" id="IPR004570">
    <property type="entry name" value="Phosphatidylglycerol_P_synth"/>
</dbReference>
<dbReference type="NCBIfam" id="TIGR00560">
    <property type="entry name" value="pgsA"/>
    <property type="match status" value="1"/>
</dbReference>
<dbReference type="NCBIfam" id="NF008090">
    <property type="entry name" value="PRK10832.1"/>
    <property type="match status" value="1"/>
</dbReference>
<dbReference type="PANTHER" id="PTHR14269:SF62">
    <property type="entry name" value="CDP-DIACYLGLYCEROL--GLYCEROL-3-PHOSPHATE 3-PHOSPHATIDYLTRANSFERASE 1, CHLOROPLASTIC"/>
    <property type="match status" value="1"/>
</dbReference>
<dbReference type="PANTHER" id="PTHR14269">
    <property type="entry name" value="CDP-DIACYLGLYCEROL--GLYCEROL-3-PHOSPHATE 3-PHOSPHATIDYLTRANSFERASE-RELATED"/>
    <property type="match status" value="1"/>
</dbReference>
<dbReference type="Pfam" id="PF01066">
    <property type="entry name" value="CDP-OH_P_transf"/>
    <property type="match status" value="1"/>
</dbReference>
<dbReference type="PIRSF" id="PIRSF000847">
    <property type="entry name" value="Phos_ph_gly_syn"/>
    <property type="match status" value="1"/>
</dbReference>
<dbReference type="PROSITE" id="PS00379">
    <property type="entry name" value="CDP_ALCOHOL_P_TRANSF"/>
    <property type="match status" value="1"/>
</dbReference>
<organism>
    <name type="scientific">Yersinia pestis</name>
    <dbReference type="NCBI Taxonomy" id="632"/>
    <lineage>
        <taxon>Bacteria</taxon>
        <taxon>Pseudomonadati</taxon>
        <taxon>Pseudomonadota</taxon>
        <taxon>Gammaproteobacteria</taxon>
        <taxon>Enterobacterales</taxon>
        <taxon>Yersiniaceae</taxon>
        <taxon>Yersinia</taxon>
    </lineage>
</organism>
<accession>Q8ZF51</accession>
<accession>Q0WFS7</accession>
<accession>Q74V11</accession>
<accession>Q7CI15</accession>
<evidence type="ECO:0000255" key="1">
    <source>
        <dbReference type="HAMAP-Rule" id="MF_01437"/>
    </source>
</evidence>
<protein>
    <recommendedName>
        <fullName evidence="1">CDP-diacylglycerol--glycerol-3-phosphate 3-phosphatidyltransferase</fullName>
        <ecNumber evidence="1">2.7.8.5</ecNumber>
    </recommendedName>
    <alternativeName>
        <fullName evidence="1">Phosphatidylglycerophosphate synthase</fullName>
        <shortName evidence="1">PGP synthase</shortName>
    </alternativeName>
</protein>